<dbReference type="EMBL" id="Z84812">
    <property type="status" value="NOT_ANNOTATED_CDS"/>
    <property type="molecule type" value="Genomic_DNA"/>
</dbReference>
<dbReference type="SMR" id="A8MWX3"/>
<dbReference type="ComplexPortal" id="CPX-1170">
    <property type="entry name" value="WASH complex, variant WASH4P/WASHC2C"/>
</dbReference>
<dbReference type="ComplexPortal" id="CPX-1175">
    <property type="entry name" value="WASH complex, variant WASH4P/WASHC2A"/>
</dbReference>
<dbReference type="FunCoup" id="A8MWX3">
    <property type="interactions" value="42"/>
</dbReference>
<dbReference type="IntAct" id="A8MWX3">
    <property type="interactions" value="2"/>
</dbReference>
<dbReference type="iPTMnet" id="A8MWX3"/>
<dbReference type="PhosphoSitePlus" id="A8MWX3"/>
<dbReference type="BioMuta" id="HGNC:14126"/>
<dbReference type="jPOST" id="A8MWX3"/>
<dbReference type="MassIVE" id="A8MWX3"/>
<dbReference type="PaxDb" id="9606-ENSP00000317542"/>
<dbReference type="PeptideAtlas" id="A8MWX3"/>
<dbReference type="ProteomicsDB" id="2275"/>
<dbReference type="Pumba" id="A8MWX3"/>
<dbReference type="AGR" id="HGNC:14126"/>
<dbReference type="GeneCards" id="WASH4P"/>
<dbReference type="HGNC" id="HGNC:14126">
    <property type="gene designation" value="WASH4P"/>
</dbReference>
<dbReference type="neXtProt" id="NX_A8MWX3"/>
<dbReference type="eggNOG" id="KOG1366">
    <property type="taxonomic scope" value="Eukaryota"/>
</dbReference>
<dbReference type="InParanoid" id="A8MWX3"/>
<dbReference type="PAN-GO" id="A8MWX3">
    <property type="GO annotations" value="9 GO annotations based on evolutionary models"/>
</dbReference>
<dbReference type="PhylomeDB" id="A8MWX3"/>
<dbReference type="TreeFam" id="TF318222"/>
<dbReference type="PathwayCommons" id="A8MWX3"/>
<dbReference type="SignaLink" id="A8MWX3"/>
<dbReference type="Pharos" id="A8MWX3">
    <property type="development level" value="Tdark"/>
</dbReference>
<dbReference type="PRO" id="PR:A8MWX3"/>
<dbReference type="Proteomes" id="UP000005640">
    <property type="component" value="Unplaced"/>
</dbReference>
<dbReference type="RNAct" id="A8MWX3">
    <property type="molecule type" value="protein"/>
</dbReference>
<dbReference type="GO" id="GO:0005829">
    <property type="term" value="C:cytosol"/>
    <property type="evidence" value="ECO:0007669"/>
    <property type="project" value="GOC"/>
</dbReference>
<dbReference type="GO" id="GO:0005769">
    <property type="term" value="C:early endosome"/>
    <property type="evidence" value="ECO:0000250"/>
    <property type="project" value="UniProtKB"/>
</dbReference>
<dbReference type="GO" id="GO:0031901">
    <property type="term" value="C:early endosome membrane"/>
    <property type="evidence" value="ECO:0000303"/>
    <property type="project" value="ComplexPortal"/>
</dbReference>
<dbReference type="GO" id="GO:0055037">
    <property type="term" value="C:recycling endosome"/>
    <property type="evidence" value="ECO:0000250"/>
    <property type="project" value="UniProtKB"/>
</dbReference>
<dbReference type="GO" id="GO:0055038">
    <property type="term" value="C:recycling endosome membrane"/>
    <property type="evidence" value="ECO:0007669"/>
    <property type="project" value="UniProtKB-SubCell"/>
</dbReference>
<dbReference type="GO" id="GO:0071203">
    <property type="term" value="C:WASH complex"/>
    <property type="evidence" value="ECO:0000250"/>
    <property type="project" value="UniProtKB"/>
</dbReference>
<dbReference type="GO" id="GO:0003779">
    <property type="term" value="F:actin binding"/>
    <property type="evidence" value="ECO:0007669"/>
    <property type="project" value="UniProtKB-KW"/>
</dbReference>
<dbReference type="GO" id="GO:0043014">
    <property type="term" value="F:alpha-tubulin binding"/>
    <property type="evidence" value="ECO:0000250"/>
    <property type="project" value="UniProtKB"/>
</dbReference>
<dbReference type="GO" id="GO:0043015">
    <property type="term" value="F:gamma-tubulin binding"/>
    <property type="evidence" value="ECO:0000318"/>
    <property type="project" value="GO_Central"/>
</dbReference>
<dbReference type="GO" id="GO:0034314">
    <property type="term" value="P:Arp2/3 complex-mediated actin nucleation"/>
    <property type="evidence" value="ECO:0000250"/>
    <property type="project" value="UniProtKB"/>
</dbReference>
<dbReference type="GO" id="GO:0032456">
    <property type="term" value="P:endocytic recycling"/>
    <property type="evidence" value="ECO:0000318"/>
    <property type="project" value="GO_Central"/>
</dbReference>
<dbReference type="GO" id="GO:0016197">
    <property type="term" value="P:endosomal transport"/>
    <property type="evidence" value="ECO:0000250"/>
    <property type="project" value="UniProtKB"/>
</dbReference>
<dbReference type="GO" id="GO:0006887">
    <property type="term" value="P:exocytosis"/>
    <property type="evidence" value="ECO:0000318"/>
    <property type="project" value="GO_Central"/>
</dbReference>
<dbReference type="GO" id="GO:0034315">
    <property type="term" value="P:regulation of Arp2/3 complex-mediated actin nucleation"/>
    <property type="evidence" value="ECO:0000303"/>
    <property type="project" value="ComplexPortal"/>
</dbReference>
<dbReference type="GO" id="GO:0042147">
    <property type="term" value="P:retrograde transport, endosome to Golgi"/>
    <property type="evidence" value="ECO:0000250"/>
    <property type="project" value="UniProtKB"/>
</dbReference>
<dbReference type="InterPro" id="IPR028290">
    <property type="entry name" value="WASH1"/>
</dbReference>
<dbReference type="InterPro" id="IPR021854">
    <property type="entry name" value="WASH1_WAHD"/>
</dbReference>
<dbReference type="PANTHER" id="PTHR23331">
    <property type="entry name" value="CXYORF1"/>
    <property type="match status" value="1"/>
</dbReference>
<dbReference type="PANTHER" id="PTHR23331:SF3">
    <property type="entry name" value="WAS PROTEIN FAMILY HOMOLOG 4-RELATED"/>
    <property type="match status" value="1"/>
</dbReference>
<dbReference type="Pfam" id="PF11945">
    <property type="entry name" value="WASH_WAHD"/>
    <property type="match status" value="1"/>
</dbReference>
<protein>
    <recommendedName>
        <fullName>Putative WAS protein family homolog 4</fullName>
    </recommendedName>
    <alternativeName>
        <fullName>Protein FAM39CP</fullName>
    </alternativeName>
</protein>
<evidence type="ECO:0000250" key="1">
    <source>
        <dbReference type="UniProtKB" id="A8K0Z3"/>
    </source>
</evidence>
<evidence type="ECO:0000250" key="2">
    <source>
        <dbReference type="UniProtKB" id="C4AMC7"/>
    </source>
</evidence>
<evidence type="ECO:0000250" key="3">
    <source>
        <dbReference type="UniProtKB" id="Q8VDD8"/>
    </source>
</evidence>
<evidence type="ECO:0000256" key="4">
    <source>
        <dbReference type="SAM" id="MobiDB-lite"/>
    </source>
</evidence>
<evidence type="ECO:0000305" key="5"/>
<evidence type="ECO:0000305" key="6">
    <source>
    </source>
</evidence>
<comment type="function">
    <text evidence="1 2">May act as a nucleation-promoting factor at the surface of endosomes, where it recruits and activates the Arp2/3 complex to induce actin polymerization, playing a key role in the fission of tubules that serve as transport intermediates during endosome sorting.</text>
</comment>
<comment type="subunit">
    <text evidence="1">Interacts (via WHD1 region) with WASHC2C; the interaction is direct (By similarity).</text>
</comment>
<comment type="subcellular location">
    <subcellularLocation>
        <location evidence="1">Early endosome membrane</location>
    </subcellularLocation>
    <subcellularLocation>
        <location evidence="3">Recycling endosome membrane</location>
    </subcellularLocation>
    <text evidence="1">Localization to the endosome membrane is mediated via its interaction with WASHC2.</text>
</comment>
<comment type="miscellaneous">
    <text evidence="6">WASH genes duplicated to multiple chromosomal ends during primate evolution, with highest copy number reached in humans, whose WASH repertoires probably vary extensively among individuals (PubMed:18159949). It is therefore difficult to determine which gene is functional or not. The telomeric region of chromosome 9p is paralogous to the pericentromeric regions of chromosome 9 as well as to 2q. Paralogous regions contain 7 transcriptional units. Duplicated WASH genes are also present in the Xq/Yq pseudoautosomal region, as well as on chromosome 1 and 15. The chromosome 16 copy seems to be a pseudogene.</text>
</comment>
<comment type="similarity">
    <text evidence="5">Belongs to the WASH1 family.</text>
</comment>
<comment type="caution">
    <text evidence="5">The WASH4P N-terminus differs from WASH3P for which it is shown to be required for the WASH complex assembly. Hence is association within the WASH complex is ambiguous. However, WASH4P retains the regions implicated in interaction with WASHC2 and conferring in vitro NPF activity.</text>
</comment>
<comment type="caution">
    <text evidence="5">Could be the product of a pseudogene.</text>
</comment>
<gene>
    <name type="primary">WASH4P</name>
    <name type="synonym">FAM39CP</name>
</gene>
<keyword id="KW-0009">Actin-binding</keyword>
<keyword id="KW-0967">Endosome</keyword>
<keyword id="KW-0472">Membrane</keyword>
<keyword id="KW-1185">Reference proteome</keyword>
<keyword id="KW-0813">Transport</keyword>
<sequence>MSGVMCLKASDTWASGIRSQPQGCLGKWRSMRCKHTRMHLAHLGNSRQLISLGPPRTREDGSRISQQVEQSRSQVQAIGEKVSLAQAKIEKIKGSKKAIKVFSSAKYPAPERLQEYGSIFTDAQDPGLQRRPRHRIQSKQRPLDERALQEKLKDFPVCVSTKPEPEDDAEEGLGGLPSNISSVSSLLLFNTTENLYKKYVFLDPLAGAVTKTHVMLGAETEEKLFDAPLSISKREQLEQQVPENYFYVPDLGQVPEIDVPSYLPDLPGIANDLMYIADLGPGIAPSAPGTIPELPTFHTEVAEPLKVDLQDGVLTPPPPPPPPPPAPEVLASAPPLPPSTAAPVGQGARQDDSSSSASPSVQGAPREVVDPSGGWATLLESIRQAGGIGKAKLRSMKERKLEKQQQKEQEQVRATSQGGHLMSDLFNKLVMRRKGISGKGPGAGDGPGGAFARVSDSIPPLPPPQQPQAEDEDDWES</sequence>
<name>WASH4_HUMAN</name>
<feature type="chain" id="PRO_0000332291" description="Putative WAS protein family homolog 4">
    <location>
        <begin position="1"/>
        <end position="477"/>
    </location>
</feature>
<feature type="domain" description="WH2">
    <location>
        <begin position="374"/>
        <end position="396"/>
    </location>
</feature>
<feature type="region of interest" description="WHD1">
    <location>
        <begin position="1"/>
        <end position="180"/>
    </location>
</feature>
<feature type="region of interest" description="Disordered" evidence="4">
    <location>
        <begin position="310"/>
        <end position="420"/>
    </location>
</feature>
<feature type="region of interest" description="VCA" evidence="2">
    <location>
        <begin position="362"/>
        <end position="477"/>
    </location>
</feature>
<feature type="region of interest" description="Disordered" evidence="4">
    <location>
        <begin position="434"/>
        <end position="477"/>
    </location>
</feature>
<feature type="compositionally biased region" description="Pro residues" evidence="4">
    <location>
        <begin position="315"/>
        <end position="327"/>
    </location>
</feature>
<feature type="compositionally biased region" description="Basic and acidic residues" evidence="4">
    <location>
        <begin position="395"/>
        <end position="411"/>
    </location>
</feature>
<feature type="compositionally biased region" description="Gly residues" evidence="4">
    <location>
        <begin position="437"/>
        <end position="449"/>
    </location>
</feature>
<accession>A8MWX3</accession>
<proteinExistence type="uncertain"/>
<reference key="1">
    <citation type="journal article" date="2004" name="Nature">
        <title>The sequence and analysis of duplication-rich human chromosome 16.</title>
        <authorList>
            <person name="Martin J."/>
            <person name="Han C."/>
            <person name="Gordon L.A."/>
            <person name="Terry A."/>
            <person name="Prabhakar S."/>
            <person name="She X."/>
            <person name="Xie G."/>
            <person name="Hellsten U."/>
            <person name="Chan Y.M."/>
            <person name="Altherr M."/>
            <person name="Couronne O."/>
            <person name="Aerts A."/>
            <person name="Bajorek E."/>
            <person name="Black S."/>
            <person name="Blumer H."/>
            <person name="Branscomb E."/>
            <person name="Brown N.C."/>
            <person name="Bruno W.J."/>
            <person name="Buckingham J.M."/>
            <person name="Callen D.F."/>
            <person name="Campbell C.S."/>
            <person name="Campbell M.L."/>
            <person name="Campbell E.W."/>
            <person name="Caoile C."/>
            <person name="Challacombe J.F."/>
            <person name="Chasteen L.A."/>
            <person name="Chertkov O."/>
            <person name="Chi H.C."/>
            <person name="Christensen M."/>
            <person name="Clark L.M."/>
            <person name="Cohn J.D."/>
            <person name="Denys M."/>
            <person name="Detter J.C."/>
            <person name="Dickson M."/>
            <person name="Dimitrijevic-Bussod M."/>
            <person name="Escobar J."/>
            <person name="Fawcett J.J."/>
            <person name="Flowers D."/>
            <person name="Fotopulos D."/>
            <person name="Glavina T."/>
            <person name="Gomez M."/>
            <person name="Gonzales E."/>
            <person name="Goodstein D."/>
            <person name="Goodwin L.A."/>
            <person name="Grady D.L."/>
            <person name="Grigoriev I."/>
            <person name="Groza M."/>
            <person name="Hammon N."/>
            <person name="Hawkins T."/>
            <person name="Haydu L."/>
            <person name="Hildebrand C.E."/>
            <person name="Huang W."/>
            <person name="Israni S."/>
            <person name="Jett J."/>
            <person name="Jewett P.B."/>
            <person name="Kadner K."/>
            <person name="Kimball H."/>
            <person name="Kobayashi A."/>
            <person name="Krawczyk M.-C."/>
            <person name="Leyba T."/>
            <person name="Longmire J.L."/>
            <person name="Lopez F."/>
            <person name="Lou Y."/>
            <person name="Lowry S."/>
            <person name="Ludeman T."/>
            <person name="Manohar C.F."/>
            <person name="Mark G.A."/>
            <person name="McMurray K.L."/>
            <person name="Meincke L.J."/>
            <person name="Morgan J."/>
            <person name="Moyzis R.K."/>
            <person name="Mundt M.O."/>
            <person name="Munk A.C."/>
            <person name="Nandkeshwar R.D."/>
            <person name="Pitluck S."/>
            <person name="Pollard M."/>
            <person name="Predki P."/>
            <person name="Parson-Quintana B."/>
            <person name="Ramirez L."/>
            <person name="Rash S."/>
            <person name="Retterer J."/>
            <person name="Ricke D.O."/>
            <person name="Robinson D.L."/>
            <person name="Rodriguez A."/>
            <person name="Salamov A."/>
            <person name="Saunders E.H."/>
            <person name="Scott D."/>
            <person name="Shough T."/>
            <person name="Stallings R.L."/>
            <person name="Stalvey M."/>
            <person name="Sutherland R.D."/>
            <person name="Tapia R."/>
            <person name="Tesmer J.G."/>
            <person name="Thayer N."/>
            <person name="Thompson L.S."/>
            <person name="Tice H."/>
            <person name="Torney D.C."/>
            <person name="Tran-Gyamfi M."/>
            <person name="Tsai M."/>
            <person name="Ulanovsky L.E."/>
            <person name="Ustaszewska A."/>
            <person name="Vo N."/>
            <person name="White P.S."/>
            <person name="Williams A.L."/>
            <person name="Wills P.L."/>
            <person name="Wu J.-R."/>
            <person name="Wu K."/>
            <person name="Yang J."/>
            <person name="DeJong P."/>
            <person name="Bruce D."/>
            <person name="Doggett N.A."/>
            <person name="Deaven L."/>
            <person name="Schmutz J."/>
            <person name="Grimwood J."/>
            <person name="Richardson P."/>
            <person name="Rokhsar D.S."/>
            <person name="Eichler E.E."/>
            <person name="Gilna P."/>
            <person name="Lucas S.M."/>
            <person name="Myers R.M."/>
            <person name="Rubin E.M."/>
            <person name="Pennacchio L.A."/>
        </authorList>
    </citation>
    <scope>NUCLEOTIDE SEQUENCE [LARGE SCALE GENOMIC DNA]</scope>
</reference>
<reference key="2">
    <citation type="journal article" date="2000" name="Hum. Mol. Genet.">
        <title>Differentially regulated and evolved genes in the fully sequenced Xq/Yq pseudoautosomal region.</title>
        <authorList>
            <person name="Ciccodicola A."/>
            <person name="D'Esposito M."/>
            <person name="Esposito T."/>
            <person name="Gianfrancesco F."/>
            <person name="Migliaccio C."/>
            <person name="Miano M.G."/>
            <person name="Matarazzo M.R."/>
            <person name="Vacca M."/>
            <person name="Franze A."/>
            <person name="Cuccurese M."/>
            <person name="Cocchia M."/>
            <person name="Curci A."/>
            <person name="Terracciano A."/>
            <person name="Torino A."/>
            <person name="Cocchia S."/>
            <person name="Mercadante G."/>
            <person name="Pannone E."/>
            <person name="Archidiacono N."/>
            <person name="Rocchi M."/>
            <person name="Schlessinger D."/>
            <person name="D'Urso M."/>
        </authorList>
    </citation>
    <scope>GENE DUPLICATION</scope>
</reference>
<reference key="3">
    <citation type="journal article" date="2007" name="PLoS Genet.">
        <title>Human subtelomeric WASH genes encode a new subclass of the WASP family.</title>
        <authorList>
            <person name="Linardopoulou E.V."/>
            <person name="Parghi S.S."/>
            <person name="Friedman C."/>
            <person name="Osborn G.E."/>
            <person name="Parkhurst S.M."/>
            <person name="Trask B.J."/>
        </authorList>
    </citation>
    <scope>GENE DUPLICATION</scope>
</reference>
<organism>
    <name type="scientific">Homo sapiens</name>
    <name type="common">Human</name>
    <dbReference type="NCBI Taxonomy" id="9606"/>
    <lineage>
        <taxon>Eukaryota</taxon>
        <taxon>Metazoa</taxon>
        <taxon>Chordata</taxon>
        <taxon>Craniata</taxon>
        <taxon>Vertebrata</taxon>
        <taxon>Euteleostomi</taxon>
        <taxon>Mammalia</taxon>
        <taxon>Eutheria</taxon>
        <taxon>Euarchontoglires</taxon>
        <taxon>Primates</taxon>
        <taxon>Haplorrhini</taxon>
        <taxon>Catarrhini</taxon>
        <taxon>Hominidae</taxon>
        <taxon>Homo</taxon>
    </lineage>
</organism>